<organism>
    <name type="scientific">Homo sapiens</name>
    <name type="common">Human</name>
    <dbReference type="NCBI Taxonomy" id="9606"/>
    <lineage>
        <taxon>Eukaryota</taxon>
        <taxon>Metazoa</taxon>
        <taxon>Chordata</taxon>
        <taxon>Craniata</taxon>
        <taxon>Vertebrata</taxon>
        <taxon>Euteleostomi</taxon>
        <taxon>Mammalia</taxon>
        <taxon>Eutheria</taxon>
        <taxon>Euarchontoglires</taxon>
        <taxon>Primates</taxon>
        <taxon>Haplorrhini</taxon>
        <taxon>Catarrhini</taxon>
        <taxon>Hominidae</taxon>
        <taxon>Homo</taxon>
    </lineage>
</organism>
<evidence type="ECO:0000250" key="1"/>
<evidence type="ECO:0000256" key="2">
    <source>
        <dbReference type="SAM" id="MobiDB-lite"/>
    </source>
</evidence>
<evidence type="ECO:0000303" key="3">
    <source>
    </source>
</evidence>
<evidence type="ECO:0000305" key="4"/>
<evidence type="ECO:0007744" key="5">
    <source>
    </source>
</evidence>
<proteinExistence type="evidence at protein level"/>
<name>PRP39_HUMAN</name>
<sequence length="669" mass="78430">MQNSHMDEYRNSSNGSTGNSSEVVVEHPTDFSTEIMNVTEMEQSPDDSPNVNASTEETEMASAVDLPVTLTETEANFPPEYEKFWKTVENNPQDFTGWVYLLQYVEQENHLMAARKAFDRFFIHYPYCYGYWKKYADLEKRHDNIKPSDEVYRRGLQAIPLSVDLWIHYINFLKETLDPGDPETNNTIRGTFEHAVLAAGTDFRSDRLWEMYINWENEQGNLREVTAIYDRILGIPTQLYSHHFQRFKEHVQNNLPRDLLTGEQFIQLRRELASVNGHSGDDGPPGDDLPSGIEDITDPAKLITEIENMRHRIIEIHQEMFNYNEHEVSKRWTFEEGIKRPYFHVKPLEKAQLKNWKEYLEFEIENGTHERVVVLFERCVISCALYEEFWIKYAKYMENHSIEGVRHVFSRACTIHLPKKPMVHMLWAAFEEQQGNINEARNILKTFEECVLGLAMVRLRRVSLERRHGNLEEAEHLLQDAIKNAKSNNESSFYAVKLARHLFKIQKNLPKSRKVLLEAIERDKENTKLYLNLLEMEYSGDLKQNEENILNCFDKAVHGSLPIKMRITFSQRKVEFLEDFGSDVNKLLNAYDEHQTLLKEQDSLKRKAENGSEEPEEKKAHTEDTTSSSTQMIDGDLQANQAVYNYSAWYQYNYQNPWNYGQYYPPPPT</sequence>
<dbReference type="EMBL" id="AK001990">
    <property type="protein sequence ID" value="BAA92024.1"/>
    <property type="molecule type" value="mRNA"/>
</dbReference>
<dbReference type="EMBL" id="AL121809">
    <property type="status" value="NOT_ANNOTATED_CDS"/>
    <property type="molecule type" value="Genomic_DNA"/>
</dbReference>
<dbReference type="EMBL" id="BC051886">
    <property type="protein sequence ID" value="AAH51886.1"/>
    <property type="molecule type" value="mRNA"/>
</dbReference>
<dbReference type="EMBL" id="BC125126">
    <property type="protein sequence ID" value="AAI25127.1"/>
    <property type="status" value="ALT_INIT"/>
    <property type="molecule type" value="mRNA"/>
</dbReference>
<dbReference type="EMBL" id="BC125127">
    <property type="protein sequence ID" value="AAI25128.1"/>
    <property type="status" value="ALT_INIT"/>
    <property type="molecule type" value="mRNA"/>
</dbReference>
<dbReference type="CCDS" id="CCDS9682.2">
    <molecule id="Q86UA1-1"/>
</dbReference>
<dbReference type="RefSeq" id="NP_060392.3">
    <molecule id="Q86UA1-1"/>
    <property type="nucleotide sequence ID" value="NM_017922.3"/>
</dbReference>
<dbReference type="SMR" id="Q86UA1"/>
<dbReference type="BioGRID" id="120347">
    <property type="interactions" value="57"/>
</dbReference>
<dbReference type="FunCoup" id="Q86UA1">
    <property type="interactions" value="1523"/>
</dbReference>
<dbReference type="IntAct" id="Q86UA1">
    <property type="interactions" value="35"/>
</dbReference>
<dbReference type="MINT" id="Q86UA1"/>
<dbReference type="STRING" id="9606.ENSP00000348010"/>
<dbReference type="GlyGen" id="Q86UA1">
    <property type="glycosylation" value="1 site, 1 O-linked glycan (1 site)"/>
</dbReference>
<dbReference type="iPTMnet" id="Q86UA1"/>
<dbReference type="PhosphoSitePlus" id="Q86UA1"/>
<dbReference type="BioMuta" id="PRPF39"/>
<dbReference type="DMDM" id="223590245"/>
<dbReference type="jPOST" id="Q86UA1"/>
<dbReference type="MassIVE" id="Q86UA1"/>
<dbReference type="PaxDb" id="9606-ENSP00000348010"/>
<dbReference type="PeptideAtlas" id="Q86UA1"/>
<dbReference type="ProteomicsDB" id="69784">
    <molecule id="Q86UA1-1"/>
</dbReference>
<dbReference type="ProteomicsDB" id="69785">
    <molecule id="Q86UA1-2"/>
</dbReference>
<dbReference type="Pumba" id="Q86UA1"/>
<dbReference type="Antibodypedia" id="101">
    <property type="antibodies" value="136 antibodies from 27 providers"/>
</dbReference>
<dbReference type="DNASU" id="55015"/>
<dbReference type="Ensembl" id="ENST00000355765.11">
    <molecule id="Q86UA1-1"/>
    <property type="protein sequence ID" value="ENSP00000348010.6"/>
    <property type="gene ID" value="ENSG00000185246.18"/>
</dbReference>
<dbReference type="GeneID" id="55015"/>
<dbReference type="KEGG" id="hsa:55015"/>
<dbReference type="MANE-Select" id="ENST00000355765.11">
    <property type="protein sequence ID" value="ENSP00000348010.6"/>
    <property type="RefSeq nucleotide sequence ID" value="NM_017922.4"/>
    <property type="RefSeq protein sequence ID" value="NP_060392.3"/>
</dbReference>
<dbReference type="UCSC" id="uc001wvz.4">
    <molecule id="Q86UA1-1"/>
    <property type="organism name" value="human"/>
</dbReference>
<dbReference type="AGR" id="HGNC:20314"/>
<dbReference type="CTD" id="55015"/>
<dbReference type="DisGeNET" id="55015"/>
<dbReference type="GeneCards" id="PRPF39"/>
<dbReference type="HGNC" id="HGNC:20314">
    <property type="gene designation" value="PRPF39"/>
</dbReference>
<dbReference type="HPA" id="ENSG00000185246">
    <property type="expression patterns" value="Low tissue specificity"/>
</dbReference>
<dbReference type="MIM" id="614907">
    <property type="type" value="gene"/>
</dbReference>
<dbReference type="neXtProt" id="NX_Q86UA1"/>
<dbReference type="OpenTargets" id="ENSG00000185246"/>
<dbReference type="PharmGKB" id="PA142671127"/>
<dbReference type="VEuPathDB" id="HostDB:ENSG00000185246"/>
<dbReference type="eggNOG" id="KOG1258">
    <property type="taxonomic scope" value="Eukaryota"/>
</dbReference>
<dbReference type="GeneTree" id="ENSGT00390000005033"/>
<dbReference type="HOGENOM" id="CLU_007434_2_0_1"/>
<dbReference type="InParanoid" id="Q86UA1"/>
<dbReference type="OMA" id="IISWANL"/>
<dbReference type="OrthoDB" id="10265668at2759"/>
<dbReference type="PAN-GO" id="Q86UA1">
    <property type="GO annotations" value="4 GO annotations based on evolutionary models"/>
</dbReference>
<dbReference type="PhylomeDB" id="Q86UA1"/>
<dbReference type="TreeFam" id="TF314746"/>
<dbReference type="PathwayCommons" id="Q86UA1"/>
<dbReference type="SignaLink" id="Q86UA1"/>
<dbReference type="BioGRID-ORCS" id="55015">
    <property type="hits" value="306 hits in 1177 CRISPR screens"/>
</dbReference>
<dbReference type="ChiTaRS" id="PRPF39">
    <property type="organism name" value="human"/>
</dbReference>
<dbReference type="GenomeRNAi" id="55015"/>
<dbReference type="Pharos" id="Q86UA1">
    <property type="development level" value="Tbio"/>
</dbReference>
<dbReference type="PRO" id="PR:Q86UA1"/>
<dbReference type="Proteomes" id="UP000005640">
    <property type="component" value="Chromosome 14"/>
</dbReference>
<dbReference type="RNAct" id="Q86UA1">
    <property type="molecule type" value="protein"/>
</dbReference>
<dbReference type="Bgee" id="ENSG00000185246">
    <property type="expression patterns" value="Expressed in cerebellar hemisphere and 193 other cell types or tissues"/>
</dbReference>
<dbReference type="ExpressionAtlas" id="Q86UA1">
    <property type="expression patterns" value="baseline and differential"/>
</dbReference>
<dbReference type="GO" id="GO:0000243">
    <property type="term" value="C:commitment complex"/>
    <property type="evidence" value="ECO:0000318"/>
    <property type="project" value="GO_Central"/>
</dbReference>
<dbReference type="GO" id="GO:0005685">
    <property type="term" value="C:U1 snRNP"/>
    <property type="evidence" value="ECO:0000318"/>
    <property type="project" value="GO_Central"/>
</dbReference>
<dbReference type="GO" id="GO:0071004">
    <property type="term" value="C:U2-type prespliceosome"/>
    <property type="evidence" value="ECO:0000318"/>
    <property type="project" value="GO_Central"/>
</dbReference>
<dbReference type="GO" id="GO:0000395">
    <property type="term" value="P:mRNA 5'-splice site recognition"/>
    <property type="evidence" value="ECO:0000318"/>
    <property type="project" value="GO_Central"/>
</dbReference>
<dbReference type="FunFam" id="1.25.40.10:FF:000063">
    <property type="entry name" value="Pre-mRNA processing factor 39"/>
    <property type="match status" value="1"/>
</dbReference>
<dbReference type="FunFam" id="1.25.40.10:FF:000091">
    <property type="entry name" value="Pre-mRNA-processing factor 39"/>
    <property type="match status" value="1"/>
</dbReference>
<dbReference type="Gene3D" id="1.25.40.10">
    <property type="entry name" value="Tetratricopeptide repeat domain"/>
    <property type="match status" value="2"/>
</dbReference>
<dbReference type="InterPro" id="IPR003107">
    <property type="entry name" value="HAT"/>
</dbReference>
<dbReference type="InterPro" id="IPR011990">
    <property type="entry name" value="TPR-like_helical_dom_sf"/>
</dbReference>
<dbReference type="PANTHER" id="PTHR17204">
    <property type="entry name" value="PRE-MRNA PROCESSING PROTEIN PRP39-RELATED"/>
    <property type="match status" value="1"/>
</dbReference>
<dbReference type="PANTHER" id="PTHR17204:SF5">
    <property type="entry name" value="PRE-MRNA-PROCESSING FACTOR 39"/>
    <property type="match status" value="1"/>
</dbReference>
<dbReference type="Pfam" id="PF23241">
    <property type="entry name" value="HAT_PRP39_C"/>
    <property type="match status" value="1"/>
</dbReference>
<dbReference type="Pfam" id="PF23240">
    <property type="entry name" value="HAT_PRP39_N"/>
    <property type="match status" value="1"/>
</dbReference>
<dbReference type="SMART" id="SM00386">
    <property type="entry name" value="HAT"/>
    <property type="match status" value="7"/>
</dbReference>
<dbReference type="SUPFAM" id="SSF48452">
    <property type="entry name" value="TPR-like"/>
    <property type="match status" value="2"/>
</dbReference>
<gene>
    <name type="primary">PRPF39</name>
</gene>
<comment type="function">
    <text evidence="1">Involved in pre-mRNA splicing.</text>
</comment>
<comment type="interaction">
    <interactant intactId="EBI-2803203">
        <id>Q86UA1</id>
    </interactant>
    <interactant intactId="EBI-11954292">
        <id>Q86V38</id>
        <label>ATN1</label>
    </interactant>
    <organismsDiffer>false</organismsDiffer>
    <experiments>3</experiments>
</comment>
<comment type="interaction">
    <interactant intactId="EBI-2803203">
        <id>Q86UA1</id>
    </interactant>
    <interactant intactId="EBI-25837549">
        <id>P28329-3</id>
        <label>CHAT</label>
    </interactant>
    <organismsDiffer>false</organismsDiffer>
    <experiments>3</experiments>
</comment>
<comment type="interaction">
    <interactant intactId="EBI-2803203">
        <id>Q86UA1</id>
    </interactant>
    <interactant intactId="EBI-348399">
        <id>P22607</id>
        <label>FGFR3</label>
    </interactant>
    <organismsDiffer>false</organismsDiffer>
    <experiments>3</experiments>
</comment>
<comment type="interaction">
    <interactant intactId="EBI-2803203">
        <id>Q86UA1</id>
    </interactant>
    <interactant intactId="EBI-2432309">
        <id>Q92876</id>
        <label>KLK6</label>
    </interactant>
    <organismsDiffer>false</organismsDiffer>
    <experiments>3</experiments>
</comment>
<comment type="interaction">
    <interactant intactId="EBI-2803203">
        <id>Q86UA1</id>
    </interactant>
    <interactant intactId="EBI-395421">
        <id>Q16637</id>
        <label>SMN2</label>
    </interactant>
    <organismsDiffer>false</organismsDiffer>
    <experiments>3</experiments>
</comment>
<comment type="interaction">
    <interactant intactId="EBI-2803203">
        <id>Q86UA1</id>
    </interactant>
    <interactant intactId="EBI-74615">
        <id>Q9H0E2</id>
        <label>TOLLIP</label>
    </interactant>
    <organismsDiffer>false</organismsDiffer>
    <experiments>3</experiments>
</comment>
<comment type="subcellular location">
    <subcellularLocation>
        <location evidence="1">Nucleus</location>
    </subcellularLocation>
</comment>
<comment type="alternative products">
    <event type="alternative splicing"/>
    <isoform>
        <id>Q86UA1-1</id>
        <name>1</name>
        <sequence type="displayed"/>
    </isoform>
    <isoform>
        <id>Q86UA1-2</id>
        <name>2</name>
        <sequence type="described" ref="VSP_021496 VSP_021497"/>
    </isoform>
</comment>
<comment type="similarity">
    <text evidence="4">Belongs to the PRP39 family.</text>
</comment>
<comment type="sequence caution" evidence="4">
    <conflict type="erroneous initiation">
        <sequence resource="EMBL-CDS" id="AAI25127"/>
    </conflict>
</comment>
<comment type="sequence caution" evidence="4">
    <conflict type="erroneous initiation">
        <sequence resource="EMBL-CDS" id="AAI25128"/>
    </conflict>
</comment>
<reference key="1">
    <citation type="journal article" date="2004" name="Nat. Genet.">
        <title>Complete sequencing and characterization of 21,243 full-length human cDNAs.</title>
        <authorList>
            <person name="Ota T."/>
            <person name="Suzuki Y."/>
            <person name="Nishikawa T."/>
            <person name="Otsuki T."/>
            <person name="Sugiyama T."/>
            <person name="Irie R."/>
            <person name="Wakamatsu A."/>
            <person name="Hayashi K."/>
            <person name="Sato H."/>
            <person name="Nagai K."/>
            <person name="Kimura K."/>
            <person name="Makita H."/>
            <person name="Sekine M."/>
            <person name="Obayashi M."/>
            <person name="Nishi T."/>
            <person name="Shibahara T."/>
            <person name="Tanaka T."/>
            <person name="Ishii S."/>
            <person name="Yamamoto J."/>
            <person name="Saito K."/>
            <person name="Kawai Y."/>
            <person name="Isono Y."/>
            <person name="Nakamura Y."/>
            <person name="Nagahari K."/>
            <person name="Murakami K."/>
            <person name="Yasuda T."/>
            <person name="Iwayanagi T."/>
            <person name="Wagatsuma M."/>
            <person name="Shiratori A."/>
            <person name="Sudo H."/>
            <person name="Hosoiri T."/>
            <person name="Kaku Y."/>
            <person name="Kodaira H."/>
            <person name="Kondo H."/>
            <person name="Sugawara M."/>
            <person name="Takahashi M."/>
            <person name="Kanda K."/>
            <person name="Yokoi T."/>
            <person name="Furuya T."/>
            <person name="Kikkawa E."/>
            <person name="Omura Y."/>
            <person name="Abe K."/>
            <person name="Kamihara K."/>
            <person name="Katsuta N."/>
            <person name="Sato K."/>
            <person name="Tanikawa M."/>
            <person name="Yamazaki M."/>
            <person name="Ninomiya K."/>
            <person name="Ishibashi T."/>
            <person name="Yamashita H."/>
            <person name="Murakawa K."/>
            <person name="Fujimori K."/>
            <person name="Tanai H."/>
            <person name="Kimata M."/>
            <person name="Watanabe M."/>
            <person name="Hiraoka S."/>
            <person name="Chiba Y."/>
            <person name="Ishida S."/>
            <person name="Ono Y."/>
            <person name="Takiguchi S."/>
            <person name="Watanabe S."/>
            <person name="Yosida M."/>
            <person name="Hotuta T."/>
            <person name="Kusano J."/>
            <person name="Kanehori K."/>
            <person name="Takahashi-Fujii A."/>
            <person name="Hara H."/>
            <person name="Tanase T.-O."/>
            <person name="Nomura Y."/>
            <person name="Togiya S."/>
            <person name="Komai F."/>
            <person name="Hara R."/>
            <person name="Takeuchi K."/>
            <person name="Arita M."/>
            <person name="Imose N."/>
            <person name="Musashino K."/>
            <person name="Yuuki H."/>
            <person name="Oshima A."/>
            <person name="Sasaki N."/>
            <person name="Aotsuka S."/>
            <person name="Yoshikawa Y."/>
            <person name="Matsunawa H."/>
            <person name="Ichihara T."/>
            <person name="Shiohata N."/>
            <person name="Sano S."/>
            <person name="Moriya S."/>
            <person name="Momiyama H."/>
            <person name="Satoh N."/>
            <person name="Takami S."/>
            <person name="Terashima Y."/>
            <person name="Suzuki O."/>
            <person name="Nakagawa S."/>
            <person name="Senoh A."/>
            <person name="Mizoguchi H."/>
            <person name="Goto Y."/>
            <person name="Shimizu F."/>
            <person name="Wakebe H."/>
            <person name="Hishigaki H."/>
            <person name="Watanabe T."/>
            <person name="Sugiyama A."/>
            <person name="Takemoto M."/>
            <person name="Kawakami B."/>
            <person name="Yamazaki M."/>
            <person name="Watanabe K."/>
            <person name="Kumagai A."/>
            <person name="Itakura S."/>
            <person name="Fukuzumi Y."/>
            <person name="Fujimori Y."/>
            <person name="Komiyama M."/>
            <person name="Tashiro H."/>
            <person name="Tanigami A."/>
            <person name="Fujiwara T."/>
            <person name="Ono T."/>
            <person name="Yamada K."/>
            <person name="Fujii Y."/>
            <person name="Ozaki K."/>
            <person name="Hirao M."/>
            <person name="Ohmori Y."/>
            <person name="Kawabata A."/>
            <person name="Hikiji T."/>
            <person name="Kobatake N."/>
            <person name="Inagaki H."/>
            <person name="Ikema Y."/>
            <person name="Okamoto S."/>
            <person name="Okitani R."/>
            <person name="Kawakami T."/>
            <person name="Noguchi S."/>
            <person name="Itoh T."/>
            <person name="Shigeta K."/>
            <person name="Senba T."/>
            <person name="Matsumura K."/>
            <person name="Nakajima Y."/>
            <person name="Mizuno T."/>
            <person name="Morinaga M."/>
            <person name="Sasaki M."/>
            <person name="Togashi T."/>
            <person name="Oyama M."/>
            <person name="Hata H."/>
            <person name="Watanabe M."/>
            <person name="Komatsu T."/>
            <person name="Mizushima-Sugano J."/>
            <person name="Satoh T."/>
            <person name="Shirai Y."/>
            <person name="Takahashi Y."/>
            <person name="Nakagawa K."/>
            <person name="Okumura K."/>
            <person name="Nagase T."/>
            <person name="Nomura N."/>
            <person name="Kikuchi H."/>
            <person name="Masuho Y."/>
            <person name="Yamashita R."/>
            <person name="Nakai K."/>
            <person name="Yada T."/>
            <person name="Nakamura Y."/>
            <person name="Ohara O."/>
            <person name="Isogai T."/>
            <person name="Sugano S."/>
        </authorList>
    </citation>
    <scope>NUCLEOTIDE SEQUENCE [LARGE SCALE MRNA] (ISOFORM 2)</scope>
    <source>
        <tissue>Placenta</tissue>
    </source>
</reference>
<reference key="2">
    <citation type="journal article" date="2003" name="Nature">
        <title>The DNA sequence and analysis of human chromosome 14.</title>
        <authorList>
            <person name="Heilig R."/>
            <person name="Eckenberg R."/>
            <person name="Petit J.-L."/>
            <person name="Fonknechten N."/>
            <person name="Da Silva C."/>
            <person name="Cattolico L."/>
            <person name="Levy M."/>
            <person name="Barbe V."/>
            <person name="De Berardinis V."/>
            <person name="Ureta-Vidal A."/>
            <person name="Pelletier E."/>
            <person name="Vico V."/>
            <person name="Anthouard V."/>
            <person name="Rowen L."/>
            <person name="Madan A."/>
            <person name="Qin S."/>
            <person name="Sun H."/>
            <person name="Du H."/>
            <person name="Pepin K."/>
            <person name="Artiguenave F."/>
            <person name="Robert C."/>
            <person name="Cruaud C."/>
            <person name="Bruels T."/>
            <person name="Jaillon O."/>
            <person name="Friedlander L."/>
            <person name="Samson G."/>
            <person name="Brottier P."/>
            <person name="Cure S."/>
            <person name="Segurens B."/>
            <person name="Aniere F."/>
            <person name="Samain S."/>
            <person name="Crespeau H."/>
            <person name="Abbasi N."/>
            <person name="Aiach N."/>
            <person name="Boscus D."/>
            <person name="Dickhoff R."/>
            <person name="Dors M."/>
            <person name="Dubois I."/>
            <person name="Friedman C."/>
            <person name="Gouyvenoux M."/>
            <person name="James R."/>
            <person name="Madan A."/>
            <person name="Mairey-Estrada B."/>
            <person name="Mangenot S."/>
            <person name="Martins N."/>
            <person name="Menard M."/>
            <person name="Oztas S."/>
            <person name="Ratcliffe A."/>
            <person name="Shaffer T."/>
            <person name="Trask B."/>
            <person name="Vacherie B."/>
            <person name="Bellemere C."/>
            <person name="Belser C."/>
            <person name="Besnard-Gonnet M."/>
            <person name="Bartol-Mavel D."/>
            <person name="Boutard M."/>
            <person name="Briez-Silla S."/>
            <person name="Combette S."/>
            <person name="Dufosse-Laurent V."/>
            <person name="Ferron C."/>
            <person name="Lechaplais C."/>
            <person name="Louesse C."/>
            <person name="Muselet D."/>
            <person name="Magdelenat G."/>
            <person name="Pateau E."/>
            <person name="Petit E."/>
            <person name="Sirvain-Trukniewicz P."/>
            <person name="Trybou A."/>
            <person name="Vega-Czarny N."/>
            <person name="Bataille E."/>
            <person name="Bluet E."/>
            <person name="Bordelais I."/>
            <person name="Dubois M."/>
            <person name="Dumont C."/>
            <person name="Guerin T."/>
            <person name="Haffray S."/>
            <person name="Hammadi R."/>
            <person name="Muanga J."/>
            <person name="Pellouin V."/>
            <person name="Robert D."/>
            <person name="Wunderle E."/>
            <person name="Gauguet G."/>
            <person name="Roy A."/>
            <person name="Sainte-Marthe L."/>
            <person name="Verdier J."/>
            <person name="Verdier-Discala C."/>
            <person name="Hillier L.W."/>
            <person name="Fulton L."/>
            <person name="McPherson J."/>
            <person name="Matsuda F."/>
            <person name="Wilson R."/>
            <person name="Scarpelli C."/>
            <person name="Gyapay G."/>
            <person name="Wincker P."/>
            <person name="Saurin W."/>
            <person name="Quetier F."/>
            <person name="Waterston R."/>
            <person name="Hood L."/>
            <person name="Weissenbach J."/>
        </authorList>
    </citation>
    <scope>NUCLEOTIDE SEQUENCE [LARGE SCALE GENOMIC DNA]</scope>
</reference>
<reference key="3">
    <citation type="journal article" date="2004" name="Genome Res.">
        <title>The status, quality, and expansion of the NIH full-length cDNA project: the Mammalian Gene Collection (MGC).</title>
        <authorList>
            <consortium name="The MGC Project Team"/>
        </authorList>
    </citation>
    <scope>NUCLEOTIDE SEQUENCE [LARGE SCALE MRNA] (ISOFORM 1)</scope>
    <source>
        <tissue>Uterus</tissue>
    </source>
</reference>
<reference key="4">
    <citation type="journal article" date="2011" name="BMC Syst. Biol.">
        <title>Initial characterization of the human central proteome.</title>
        <authorList>
            <person name="Burkard T.R."/>
            <person name="Planyavsky M."/>
            <person name="Kaupe I."/>
            <person name="Breitwieser F.P."/>
            <person name="Buerckstuemmer T."/>
            <person name="Bennett K.L."/>
            <person name="Superti-Furga G."/>
            <person name="Colinge J."/>
        </authorList>
    </citation>
    <scope>IDENTIFICATION BY MASS SPECTROMETRY [LARGE SCALE ANALYSIS]</scope>
</reference>
<reference key="5">
    <citation type="journal article" date="2014" name="J. Proteomics">
        <title>An enzyme assisted RP-RPLC approach for in-depth analysis of human liver phosphoproteome.</title>
        <authorList>
            <person name="Bian Y."/>
            <person name="Song C."/>
            <person name="Cheng K."/>
            <person name="Dong M."/>
            <person name="Wang F."/>
            <person name="Huang J."/>
            <person name="Sun D."/>
            <person name="Wang L."/>
            <person name="Ye M."/>
            <person name="Zou H."/>
        </authorList>
    </citation>
    <scope>PHOSPHORYLATION [LARGE SCALE ANALYSIS] AT SER-44</scope>
    <scope>IDENTIFICATION BY MASS SPECTROMETRY [LARGE SCALE ANALYSIS]</scope>
    <source>
        <tissue>Liver</tissue>
    </source>
</reference>
<accession>Q86UA1</accession>
<accession>Q08AL1</accession>
<accession>Q08AL2</accession>
<accession>Q9NUU5</accession>
<feature type="chain" id="PRO_0000259648" description="Pre-mRNA-processing factor 39">
    <location>
        <begin position="1"/>
        <end position="669"/>
    </location>
</feature>
<feature type="repeat" description="HAT 1">
    <location>
        <begin position="109"/>
        <end position="141"/>
    </location>
</feature>
<feature type="repeat" description="HAT 2">
    <location>
        <begin position="143"/>
        <end position="175"/>
    </location>
</feature>
<feature type="repeat" description="HAT 3">
    <location>
        <begin position="183"/>
        <end position="218"/>
    </location>
</feature>
<feature type="repeat" description="HAT 4">
    <location>
        <begin position="220"/>
        <end position="253"/>
    </location>
</feature>
<feature type="repeat" description="HAT 5">
    <location>
        <begin position="333"/>
        <end position="365"/>
    </location>
</feature>
<feature type="repeat" description="HAT 6">
    <location>
        <begin position="367"/>
        <end position="399"/>
    </location>
</feature>
<feature type="repeat" description="HAT 7">
    <location>
        <begin position="404"/>
        <end position="436"/>
    </location>
</feature>
<feature type="region of interest" description="Disordered" evidence="2">
    <location>
        <begin position="1"/>
        <end position="23"/>
    </location>
</feature>
<feature type="region of interest" description="Disordered" evidence="2">
    <location>
        <begin position="599"/>
        <end position="634"/>
    </location>
</feature>
<feature type="compositionally biased region" description="Basic and acidic residues" evidence="2">
    <location>
        <begin position="1"/>
        <end position="10"/>
    </location>
</feature>
<feature type="compositionally biased region" description="Low complexity" evidence="2">
    <location>
        <begin position="11"/>
        <end position="23"/>
    </location>
</feature>
<feature type="compositionally biased region" description="Basic and acidic residues" evidence="2">
    <location>
        <begin position="599"/>
        <end position="624"/>
    </location>
</feature>
<feature type="compositionally biased region" description="Polar residues" evidence="2">
    <location>
        <begin position="625"/>
        <end position="634"/>
    </location>
</feature>
<feature type="modified residue" description="Phosphoserine" evidence="5">
    <location>
        <position position="44"/>
    </location>
</feature>
<feature type="splice variant" id="VSP_021496" description="In isoform 2." evidence="3">
    <location>
        <begin position="1"/>
        <end position="396"/>
    </location>
</feature>
<feature type="splice variant" id="VSP_021497" description="In isoform 2." evidence="3">
    <original>YNYQNPWNYGQYYPPPPT</original>
    <variation>VSLHNYNSLFIDVISIN</variation>
    <location>
        <begin position="652"/>
        <end position="669"/>
    </location>
</feature>
<feature type="sequence conflict" description="In Ref. 3; AAI25128." evidence="4" ref="3">
    <original>R</original>
    <variation>G</variation>
    <location>
        <position position="312"/>
    </location>
</feature>
<protein>
    <recommendedName>
        <fullName>Pre-mRNA-processing factor 39</fullName>
    </recommendedName>
    <alternativeName>
        <fullName>PRP39 homolog</fullName>
    </alternativeName>
</protein>
<keyword id="KW-0025">Alternative splicing</keyword>
<keyword id="KW-0507">mRNA processing</keyword>
<keyword id="KW-0508">mRNA splicing</keyword>
<keyword id="KW-0539">Nucleus</keyword>
<keyword id="KW-0597">Phosphoprotein</keyword>
<keyword id="KW-1267">Proteomics identification</keyword>
<keyword id="KW-1185">Reference proteome</keyword>
<keyword id="KW-0677">Repeat</keyword>